<name>ACDH_ECO8A</name>
<evidence type="ECO:0000255" key="1">
    <source>
        <dbReference type="HAMAP-Rule" id="MF_01657"/>
    </source>
</evidence>
<feature type="chain" id="PRO_1000187033" description="Acetaldehyde dehydrogenase">
    <location>
        <begin position="1"/>
        <end position="316"/>
    </location>
</feature>
<feature type="active site" description="Acyl-thioester intermediate" evidence="1">
    <location>
        <position position="131"/>
    </location>
</feature>
<feature type="binding site" evidence="1">
    <location>
        <begin position="11"/>
        <end position="14"/>
    </location>
    <ligand>
        <name>NAD(+)</name>
        <dbReference type="ChEBI" id="CHEBI:57540"/>
    </ligand>
</feature>
<feature type="binding site" evidence="1">
    <location>
        <begin position="162"/>
        <end position="170"/>
    </location>
    <ligand>
        <name>NAD(+)</name>
        <dbReference type="ChEBI" id="CHEBI:57540"/>
    </ligand>
</feature>
<feature type="binding site" evidence="1">
    <location>
        <position position="289"/>
    </location>
    <ligand>
        <name>NAD(+)</name>
        <dbReference type="ChEBI" id="CHEBI:57540"/>
    </ligand>
</feature>
<keyword id="KW-0058">Aromatic hydrocarbons catabolism</keyword>
<keyword id="KW-0520">NAD</keyword>
<keyword id="KW-0560">Oxidoreductase</keyword>
<proteinExistence type="inferred from homology"/>
<accession>B7M2Z9</accession>
<sequence>MSKRKVAIIGSGNIGTDLMIKILRHGQHLEMAVMVGIDPQSDGLARARRMGVATTHEGVIGLMNMPEFADIDIVFDATSAGAHVKNDAALREAKPDIRLIDLTPAAIGPYCVPVVNLEANVDQLNVNMVTCGGQATIPMVAAVSRVARVHYAEIIASIASKSAGPGTRANIDEFTETTSRAIEVVGGAAKGKAIIVLNPAEPPLMMRDTVYVLSDEASQDDIEASINEMAEAVQAYVPGYRLKQRVQFEVIPQDKPVNLPGVGQFSGLKTAVWLEVEGAAHYLPAYAGNLDIMTSSALATAEKMAQSLARKAGEAA</sequence>
<organism>
    <name type="scientific">Escherichia coli O8 (strain IAI1)</name>
    <dbReference type="NCBI Taxonomy" id="585034"/>
    <lineage>
        <taxon>Bacteria</taxon>
        <taxon>Pseudomonadati</taxon>
        <taxon>Pseudomonadota</taxon>
        <taxon>Gammaproteobacteria</taxon>
        <taxon>Enterobacterales</taxon>
        <taxon>Enterobacteriaceae</taxon>
        <taxon>Escherichia</taxon>
    </lineage>
</organism>
<dbReference type="EC" id="1.2.1.10" evidence="1"/>
<dbReference type="EMBL" id="CU928160">
    <property type="protein sequence ID" value="CAQ97226.1"/>
    <property type="molecule type" value="Genomic_DNA"/>
</dbReference>
<dbReference type="RefSeq" id="WP_000044314.1">
    <property type="nucleotide sequence ID" value="NC_011741.1"/>
</dbReference>
<dbReference type="SMR" id="B7M2Z9"/>
<dbReference type="GeneID" id="93777104"/>
<dbReference type="KEGG" id="ecr:ECIAI1_0352"/>
<dbReference type="HOGENOM" id="CLU_062208_0_0_6"/>
<dbReference type="UniPathway" id="UPA00714"/>
<dbReference type="GO" id="GO:0008774">
    <property type="term" value="F:acetaldehyde dehydrogenase (acetylating) activity"/>
    <property type="evidence" value="ECO:0007669"/>
    <property type="project" value="UniProtKB-UniRule"/>
</dbReference>
<dbReference type="GO" id="GO:0051287">
    <property type="term" value="F:NAD binding"/>
    <property type="evidence" value="ECO:0007669"/>
    <property type="project" value="UniProtKB-UniRule"/>
</dbReference>
<dbReference type="GO" id="GO:0019380">
    <property type="term" value="P:3-phenylpropionate catabolic process"/>
    <property type="evidence" value="ECO:0007669"/>
    <property type="project" value="UniProtKB-UniRule"/>
</dbReference>
<dbReference type="CDD" id="cd23933">
    <property type="entry name" value="ALDH_C"/>
    <property type="match status" value="1"/>
</dbReference>
<dbReference type="FunFam" id="3.30.360.10:FF:000021">
    <property type="entry name" value="Acetaldehyde dehydrogenase"/>
    <property type="match status" value="1"/>
</dbReference>
<dbReference type="Gene3D" id="3.30.360.10">
    <property type="entry name" value="Dihydrodipicolinate Reductase, domain 2"/>
    <property type="match status" value="1"/>
</dbReference>
<dbReference type="Gene3D" id="3.40.50.720">
    <property type="entry name" value="NAD(P)-binding Rossmann-like Domain"/>
    <property type="match status" value="1"/>
</dbReference>
<dbReference type="HAMAP" id="MF_01657">
    <property type="entry name" value="Ac_ald_DH_ac"/>
    <property type="match status" value="1"/>
</dbReference>
<dbReference type="InterPro" id="IPR003361">
    <property type="entry name" value="Acetaldehyde_dehydrogenase"/>
</dbReference>
<dbReference type="InterPro" id="IPR015426">
    <property type="entry name" value="Acetylaldehyde_DH_C"/>
</dbReference>
<dbReference type="InterPro" id="IPR036291">
    <property type="entry name" value="NAD(P)-bd_dom_sf"/>
</dbReference>
<dbReference type="InterPro" id="IPR000534">
    <property type="entry name" value="Semialdehyde_DH_NAD-bd"/>
</dbReference>
<dbReference type="NCBIfam" id="TIGR03215">
    <property type="entry name" value="ac_ald_DH_ac"/>
    <property type="match status" value="1"/>
</dbReference>
<dbReference type="NCBIfam" id="NF006157">
    <property type="entry name" value="PRK08300.1"/>
    <property type="match status" value="1"/>
</dbReference>
<dbReference type="Pfam" id="PF09290">
    <property type="entry name" value="AcetDehyd-dimer"/>
    <property type="match status" value="1"/>
</dbReference>
<dbReference type="Pfam" id="PF01118">
    <property type="entry name" value="Semialdhyde_dh"/>
    <property type="match status" value="1"/>
</dbReference>
<dbReference type="PIRSF" id="PIRSF015689">
    <property type="entry name" value="Actaldh_dh_actl"/>
    <property type="match status" value="1"/>
</dbReference>
<dbReference type="SMART" id="SM00859">
    <property type="entry name" value="Semialdhyde_dh"/>
    <property type="match status" value="1"/>
</dbReference>
<dbReference type="SUPFAM" id="SSF55347">
    <property type="entry name" value="Glyceraldehyde-3-phosphate dehydrogenase-like, C-terminal domain"/>
    <property type="match status" value="1"/>
</dbReference>
<dbReference type="SUPFAM" id="SSF51735">
    <property type="entry name" value="NAD(P)-binding Rossmann-fold domains"/>
    <property type="match status" value="1"/>
</dbReference>
<reference key="1">
    <citation type="journal article" date="2009" name="PLoS Genet.">
        <title>Organised genome dynamics in the Escherichia coli species results in highly diverse adaptive paths.</title>
        <authorList>
            <person name="Touchon M."/>
            <person name="Hoede C."/>
            <person name="Tenaillon O."/>
            <person name="Barbe V."/>
            <person name="Baeriswyl S."/>
            <person name="Bidet P."/>
            <person name="Bingen E."/>
            <person name="Bonacorsi S."/>
            <person name="Bouchier C."/>
            <person name="Bouvet O."/>
            <person name="Calteau A."/>
            <person name="Chiapello H."/>
            <person name="Clermont O."/>
            <person name="Cruveiller S."/>
            <person name="Danchin A."/>
            <person name="Diard M."/>
            <person name="Dossat C."/>
            <person name="Karoui M.E."/>
            <person name="Frapy E."/>
            <person name="Garry L."/>
            <person name="Ghigo J.M."/>
            <person name="Gilles A.M."/>
            <person name="Johnson J."/>
            <person name="Le Bouguenec C."/>
            <person name="Lescat M."/>
            <person name="Mangenot S."/>
            <person name="Martinez-Jehanne V."/>
            <person name="Matic I."/>
            <person name="Nassif X."/>
            <person name="Oztas S."/>
            <person name="Petit M.A."/>
            <person name="Pichon C."/>
            <person name="Rouy Z."/>
            <person name="Ruf C.S."/>
            <person name="Schneider D."/>
            <person name="Tourret J."/>
            <person name="Vacherie B."/>
            <person name="Vallenet D."/>
            <person name="Medigue C."/>
            <person name="Rocha E.P.C."/>
            <person name="Denamur E."/>
        </authorList>
    </citation>
    <scope>NUCLEOTIDE SEQUENCE [LARGE SCALE GENOMIC DNA]</scope>
    <source>
        <strain>IAI1</strain>
    </source>
</reference>
<gene>
    <name evidence="1" type="primary">mhpF</name>
    <name type="ordered locus">ECIAI1_0352</name>
</gene>
<comment type="function">
    <text evidence="1">Catalyzes the conversion of acetaldehyde to acetyl-CoA, using NAD(+) and coenzyme A. Is the final enzyme in the meta-cleavage pathway for the degradation of aromatic compounds.</text>
</comment>
<comment type="catalytic activity">
    <reaction evidence="1">
        <text>acetaldehyde + NAD(+) + CoA = acetyl-CoA + NADH + H(+)</text>
        <dbReference type="Rhea" id="RHEA:23288"/>
        <dbReference type="ChEBI" id="CHEBI:15343"/>
        <dbReference type="ChEBI" id="CHEBI:15378"/>
        <dbReference type="ChEBI" id="CHEBI:57287"/>
        <dbReference type="ChEBI" id="CHEBI:57288"/>
        <dbReference type="ChEBI" id="CHEBI:57540"/>
        <dbReference type="ChEBI" id="CHEBI:57945"/>
        <dbReference type="EC" id="1.2.1.10"/>
    </reaction>
</comment>
<comment type="pathway">
    <text evidence="1">Aromatic compound metabolism; 3-phenylpropanoate degradation.</text>
</comment>
<comment type="subunit">
    <text evidence="1">Interacts with MhpE.</text>
</comment>
<comment type="similarity">
    <text evidence="1">Belongs to the acetaldehyde dehydrogenase family.</text>
</comment>
<protein>
    <recommendedName>
        <fullName evidence="1">Acetaldehyde dehydrogenase</fullName>
        <ecNumber evidence="1">1.2.1.10</ecNumber>
    </recommendedName>
    <alternativeName>
        <fullName evidence="1">Acetaldehyde dehydrogenase [acetylating]</fullName>
    </alternativeName>
</protein>